<gene>
    <name type="primary">uppS</name>
    <name type="ordered locus">lp_2051</name>
</gene>
<feature type="chain" id="PRO_0000123628" description="Ditrans,polycis-undecaprenyl-diphosphate synthase ((2E,6E)-farnesyl-diphosphate specific)">
    <location>
        <begin position="1"/>
        <end position="259"/>
    </location>
</feature>
<feature type="active site" evidence="1">
    <location>
        <position position="32"/>
    </location>
</feature>
<feature type="active site" description="Proton acceptor" evidence="1">
    <location>
        <position position="80"/>
    </location>
</feature>
<feature type="binding site" evidence="1">
    <location>
        <position position="32"/>
    </location>
    <ligand>
        <name>Mg(2+)</name>
        <dbReference type="ChEBI" id="CHEBI:18420"/>
    </ligand>
</feature>
<feature type="binding site" evidence="1">
    <location>
        <begin position="33"/>
        <end position="36"/>
    </location>
    <ligand>
        <name>substrate</name>
    </ligand>
</feature>
<feature type="binding site" evidence="1">
    <location>
        <position position="37"/>
    </location>
    <ligand>
        <name>substrate</name>
    </ligand>
</feature>
<feature type="binding site" evidence="1">
    <location>
        <position position="45"/>
    </location>
    <ligand>
        <name>substrate</name>
    </ligand>
</feature>
<feature type="binding site" evidence="1">
    <location>
        <position position="49"/>
    </location>
    <ligand>
        <name>substrate</name>
    </ligand>
</feature>
<feature type="binding site" evidence="1">
    <location>
        <begin position="77"/>
        <end position="79"/>
    </location>
    <ligand>
        <name>substrate</name>
    </ligand>
</feature>
<feature type="binding site" evidence="1">
    <location>
        <position position="81"/>
    </location>
    <ligand>
        <name>substrate</name>
    </ligand>
</feature>
<feature type="binding site" evidence="1">
    <location>
        <position position="83"/>
    </location>
    <ligand>
        <name>substrate</name>
    </ligand>
</feature>
<feature type="binding site" evidence="1">
    <location>
        <position position="203"/>
    </location>
    <ligand>
        <name>substrate</name>
    </ligand>
</feature>
<feature type="binding site" evidence="1">
    <location>
        <begin position="209"/>
        <end position="211"/>
    </location>
    <ligand>
        <name>substrate</name>
    </ligand>
</feature>
<feature type="binding site" evidence="1">
    <location>
        <position position="222"/>
    </location>
    <ligand>
        <name>Mg(2+)</name>
        <dbReference type="ChEBI" id="CHEBI:18420"/>
    </ligand>
</feature>
<sequence length="259" mass="28838">MFAFFNKNDPADNTDVQLDPERIPAHVAIIMDGNGRWAKARHLPRVAGHKEGMNTVKKITIAASDLGVKVLTLYAFSTENWKRPTDEVNYLMQLPVSFFDTFVPDLIKNNVRVQVMGYVDHLPEATQKAVQNAIADTKDCDGMVLNFALNYGSRAEIVTGVQKIAQQVQDGQLAVGDIDDATIDAALMTAPLAPYNDPDLLIRTSGEERISNFLMWQIAYSELVFTDVKWPDFTAATLQACIADFQSRDRRFGGLSDHK</sequence>
<name>UPPS_LACPL</name>
<dbReference type="EC" id="2.5.1.31"/>
<dbReference type="EMBL" id="AL935263">
    <property type="protein sequence ID" value="CCC79295.1"/>
    <property type="molecule type" value="Genomic_DNA"/>
</dbReference>
<dbReference type="RefSeq" id="WP_003640735.1">
    <property type="nucleotide sequence ID" value="NC_004567.2"/>
</dbReference>
<dbReference type="RefSeq" id="YP_004889809.1">
    <property type="nucleotide sequence ID" value="NC_004567.2"/>
</dbReference>
<dbReference type="SMR" id="Q88VJ8"/>
<dbReference type="STRING" id="220668.lp_2051"/>
<dbReference type="EnsemblBacteria" id="CCC79295">
    <property type="protein sequence ID" value="CCC79295"/>
    <property type="gene ID" value="lp_2051"/>
</dbReference>
<dbReference type="KEGG" id="lpl:lp_2051"/>
<dbReference type="PATRIC" id="fig|220668.9.peg.1736"/>
<dbReference type="eggNOG" id="COG0020">
    <property type="taxonomic scope" value="Bacteria"/>
</dbReference>
<dbReference type="HOGENOM" id="CLU_038505_1_1_9"/>
<dbReference type="OrthoDB" id="4191603at2"/>
<dbReference type="PhylomeDB" id="Q88VJ8"/>
<dbReference type="BRENDA" id="2.5.1.31">
    <property type="organism ID" value="2849"/>
</dbReference>
<dbReference type="SABIO-RK" id="Q88VJ8"/>
<dbReference type="Proteomes" id="UP000000432">
    <property type="component" value="Chromosome"/>
</dbReference>
<dbReference type="GO" id="GO:0005829">
    <property type="term" value="C:cytosol"/>
    <property type="evidence" value="ECO:0007669"/>
    <property type="project" value="TreeGrafter"/>
</dbReference>
<dbReference type="GO" id="GO:0008834">
    <property type="term" value="F:ditrans,polycis-undecaprenyl-diphosphate synthase [(2E,6E)-farnesyl-diphosphate specific] activity"/>
    <property type="evidence" value="ECO:0007669"/>
    <property type="project" value="UniProtKB-EC"/>
</dbReference>
<dbReference type="GO" id="GO:0000287">
    <property type="term" value="F:magnesium ion binding"/>
    <property type="evidence" value="ECO:0007669"/>
    <property type="project" value="UniProtKB-UniRule"/>
</dbReference>
<dbReference type="GO" id="GO:0030145">
    <property type="term" value="F:manganese ion binding"/>
    <property type="evidence" value="ECO:0007669"/>
    <property type="project" value="TreeGrafter"/>
</dbReference>
<dbReference type="GO" id="GO:0016094">
    <property type="term" value="P:polyprenol biosynthetic process"/>
    <property type="evidence" value="ECO:0007669"/>
    <property type="project" value="TreeGrafter"/>
</dbReference>
<dbReference type="CDD" id="cd00475">
    <property type="entry name" value="Cis_IPPS"/>
    <property type="match status" value="1"/>
</dbReference>
<dbReference type="FunFam" id="3.40.1180.10:FF:000001">
    <property type="entry name" value="(2E,6E)-farnesyl-diphosphate-specific ditrans,polycis-undecaprenyl-diphosphate synthase"/>
    <property type="match status" value="1"/>
</dbReference>
<dbReference type="Gene3D" id="3.40.1180.10">
    <property type="entry name" value="Decaprenyl diphosphate synthase-like"/>
    <property type="match status" value="1"/>
</dbReference>
<dbReference type="HAMAP" id="MF_01139">
    <property type="entry name" value="ISPT"/>
    <property type="match status" value="1"/>
</dbReference>
<dbReference type="InterPro" id="IPR001441">
    <property type="entry name" value="UPP_synth-like"/>
</dbReference>
<dbReference type="InterPro" id="IPR018520">
    <property type="entry name" value="UPP_synth-like_CS"/>
</dbReference>
<dbReference type="InterPro" id="IPR036424">
    <property type="entry name" value="UPP_synth-like_sf"/>
</dbReference>
<dbReference type="NCBIfam" id="NF011405">
    <property type="entry name" value="PRK14830.1"/>
    <property type="match status" value="1"/>
</dbReference>
<dbReference type="NCBIfam" id="TIGR00055">
    <property type="entry name" value="uppS"/>
    <property type="match status" value="1"/>
</dbReference>
<dbReference type="PANTHER" id="PTHR10291:SF0">
    <property type="entry name" value="DEHYDRODOLICHYL DIPHOSPHATE SYNTHASE 2"/>
    <property type="match status" value="1"/>
</dbReference>
<dbReference type="PANTHER" id="PTHR10291">
    <property type="entry name" value="DEHYDRODOLICHYL DIPHOSPHATE SYNTHASE FAMILY MEMBER"/>
    <property type="match status" value="1"/>
</dbReference>
<dbReference type="Pfam" id="PF01255">
    <property type="entry name" value="Prenyltransf"/>
    <property type="match status" value="1"/>
</dbReference>
<dbReference type="SUPFAM" id="SSF64005">
    <property type="entry name" value="Undecaprenyl diphosphate synthase"/>
    <property type="match status" value="1"/>
</dbReference>
<dbReference type="PROSITE" id="PS01066">
    <property type="entry name" value="UPP_SYNTHASE"/>
    <property type="match status" value="1"/>
</dbReference>
<evidence type="ECO:0000250" key="1"/>
<evidence type="ECO:0000269" key="2">
    <source>
    </source>
</evidence>
<evidence type="ECO:0000305" key="3"/>
<protein>
    <recommendedName>
        <fullName>Ditrans,polycis-undecaprenyl-diphosphate synthase ((2E,6E)-farnesyl-diphosphate specific)</fullName>
        <ecNumber>2.5.1.31</ecNumber>
    </recommendedName>
    <alternativeName>
        <fullName>Ditrans,polycis-undecaprenylcistransferase</fullName>
    </alternativeName>
    <alternativeName>
        <fullName>Undecaprenyl diphosphate synthase</fullName>
        <shortName>UDS</shortName>
    </alternativeName>
    <alternativeName>
        <fullName>Undecaprenyl pyrophosphate synthase</fullName>
        <shortName>UPP synthase</shortName>
    </alternativeName>
</protein>
<comment type="function">
    <text evidence="2">Catalyzes the sequential condensation of isopentenyl diphosphate (IPP) with (2E,6E)-farnesyl diphosphate (E,E-FPP) to yield (2Z,6Z,10Z,14Z,18Z,22Z,26Z,30Z,34E,38E)-undecaprenyl diphosphate (di-trans,octa-cis-UPP). UPP is the precursor of glycosyl carrier lipid in the biosynthesis of bacterial cell wall polysaccharide components such as peptidoglycan and lipopolysaccharide.</text>
</comment>
<comment type="catalytic activity">
    <reaction>
        <text>8 isopentenyl diphosphate + (2E,6E)-farnesyl diphosphate = di-trans,octa-cis-undecaprenyl diphosphate + 8 diphosphate</text>
        <dbReference type="Rhea" id="RHEA:27551"/>
        <dbReference type="ChEBI" id="CHEBI:33019"/>
        <dbReference type="ChEBI" id="CHEBI:58405"/>
        <dbReference type="ChEBI" id="CHEBI:128769"/>
        <dbReference type="ChEBI" id="CHEBI:175763"/>
        <dbReference type="EC" id="2.5.1.31"/>
    </reaction>
</comment>
<comment type="cofactor">
    <cofactor evidence="1">
        <name>Mg(2+)</name>
        <dbReference type="ChEBI" id="CHEBI:18420"/>
    </cofactor>
    <text evidence="1">Binds 2 magnesium ions per subunit.</text>
</comment>
<comment type="biophysicochemical properties">
    <kinetics>
        <KM evidence="2">0.13 uM for FPP</KM>
        <KM evidence="2">1.93 uM for IPP</KM>
    </kinetics>
</comment>
<comment type="subunit">
    <text evidence="2">Homodimer.</text>
</comment>
<comment type="similarity">
    <text evidence="3">Belongs to the UPP synthase family.</text>
</comment>
<keyword id="KW-0460">Magnesium</keyword>
<keyword id="KW-0479">Metal-binding</keyword>
<keyword id="KW-1185">Reference proteome</keyword>
<keyword id="KW-0808">Transferase</keyword>
<proteinExistence type="evidence at protein level"/>
<organism>
    <name type="scientific">Lactiplantibacillus plantarum (strain ATCC BAA-793 / NCIMB 8826 / WCFS1)</name>
    <name type="common">Lactobacillus plantarum</name>
    <dbReference type="NCBI Taxonomy" id="220668"/>
    <lineage>
        <taxon>Bacteria</taxon>
        <taxon>Bacillati</taxon>
        <taxon>Bacillota</taxon>
        <taxon>Bacilli</taxon>
        <taxon>Lactobacillales</taxon>
        <taxon>Lactobacillaceae</taxon>
        <taxon>Lactiplantibacillus</taxon>
    </lineage>
</organism>
<accession>Q88VJ8</accession>
<accession>F9UQ06</accession>
<reference key="1">
    <citation type="journal article" date="2003" name="Proc. Natl. Acad. Sci. U.S.A.">
        <title>Complete genome sequence of Lactobacillus plantarum WCFS1.</title>
        <authorList>
            <person name="Kleerebezem M."/>
            <person name="Boekhorst J."/>
            <person name="van Kranenburg R."/>
            <person name="Molenaar D."/>
            <person name="Kuipers O.P."/>
            <person name="Leer R."/>
            <person name="Tarchini R."/>
            <person name="Peters S.A."/>
            <person name="Sandbrink H.M."/>
            <person name="Fiers M.W.E.J."/>
            <person name="Stiekema W."/>
            <person name="Klein Lankhorst R.M."/>
            <person name="Bron P.A."/>
            <person name="Hoffer S.M."/>
            <person name="Nierop Groot M.N."/>
            <person name="Kerkhoven R."/>
            <person name="De Vries M."/>
            <person name="Ursing B."/>
            <person name="De Vos W.M."/>
            <person name="Siezen R.J."/>
        </authorList>
    </citation>
    <scope>NUCLEOTIDE SEQUENCE [LARGE SCALE GENOMIC DNA]</scope>
    <source>
        <strain>ATCC BAA-793 / NCIMB 8826 / WCFS1</strain>
    </source>
</reference>
<reference key="2">
    <citation type="journal article" date="2012" name="J. Bacteriol.">
        <title>Complete resequencing and reannotation of the Lactobacillus plantarum WCFS1 genome.</title>
        <authorList>
            <person name="Siezen R.J."/>
            <person name="Francke C."/>
            <person name="Renckens B."/>
            <person name="Boekhorst J."/>
            <person name="Wels M."/>
            <person name="Kleerebezem M."/>
            <person name="van Hijum S.A."/>
        </authorList>
    </citation>
    <scope>NUCLEOTIDE SEQUENCE [LARGE SCALE GENOMIC DNA]</scope>
    <scope>GENOME REANNOTATION</scope>
    <source>
        <strain>ATCC BAA-793 / NCIMB 8826 / WCFS1</strain>
    </source>
</reference>
<reference key="3">
    <citation type="journal article" date="1984" name="Arch. Biochem. Biophys.">
        <title>Undecaprenyl pyrophosphate synthetase from Lactobacillus plantarum: a dimeric protein.</title>
        <authorList>
            <person name="Muth J.D."/>
            <person name="Allen C.M."/>
        </authorList>
    </citation>
    <scope>FUNCTION AS AN UNDECAPRENYL DIPHOSPHATE SYNTHASE</scope>
    <scope>BIOPHYSICOCHEMICAL PROPERTIES</scope>
    <scope>SUBUNIT</scope>
</reference>